<dbReference type="EC" id="3.1.3.-" evidence="1"/>
<dbReference type="EMBL" id="CP001252">
    <property type="protein sequence ID" value="ACK47366.1"/>
    <property type="molecule type" value="Genomic_DNA"/>
</dbReference>
<dbReference type="RefSeq" id="WP_006085262.1">
    <property type="nucleotide sequence ID" value="NC_011663.1"/>
</dbReference>
<dbReference type="SMR" id="B8E7P4"/>
<dbReference type="KEGG" id="sbp:Sbal223_2880"/>
<dbReference type="HOGENOM" id="CLU_061999_0_1_6"/>
<dbReference type="Proteomes" id="UP000002507">
    <property type="component" value="Chromosome"/>
</dbReference>
<dbReference type="GO" id="GO:0005829">
    <property type="term" value="C:cytosol"/>
    <property type="evidence" value="ECO:0007669"/>
    <property type="project" value="TreeGrafter"/>
</dbReference>
<dbReference type="GO" id="GO:0016791">
    <property type="term" value="F:phosphatase activity"/>
    <property type="evidence" value="ECO:0007669"/>
    <property type="project" value="UniProtKB-UniRule"/>
</dbReference>
<dbReference type="GO" id="GO:0008270">
    <property type="term" value="F:zinc ion binding"/>
    <property type="evidence" value="ECO:0007669"/>
    <property type="project" value="UniProtKB-UniRule"/>
</dbReference>
<dbReference type="GO" id="GO:0071978">
    <property type="term" value="P:bacterial-type flagellum-dependent swarming motility"/>
    <property type="evidence" value="ECO:0007669"/>
    <property type="project" value="TreeGrafter"/>
</dbReference>
<dbReference type="CDD" id="cd07437">
    <property type="entry name" value="PHP_HisPPase_Ycdx_like"/>
    <property type="match status" value="1"/>
</dbReference>
<dbReference type="FunFam" id="3.20.20.140:FF:000008">
    <property type="entry name" value="Probable phosphatase YcdX"/>
    <property type="match status" value="1"/>
</dbReference>
<dbReference type="Gene3D" id="3.20.20.140">
    <property type="entry name" value="Metal-dependent hydrolases"/>
    <property type="match status" value="1"/>
</dbReference>
<dbReference type="HAMAP" id="MF_01561">
    <property type="entry name" value="YcdX_phosphat"/>
    <property type="match status" value="1"/>
</dbReference>
<dbReference type="InterPro" id="IPR023710">
    <property type="entry name" value="Phosphatase_YcdX_put"/>
</dbReference>
<dbReference type="InterPro" id="IPR004013">
    <property type="entry name" value="PHP_dom"/>
</dbReference>
<dbReference type="InterPro" id="IPR050243">
    <property type="entry name" value="PHP_phosphatase"/>
</dbReference>
<dbReference type="InterPro" id="IPR003141">
    <property type="entry name" value="Pol/His_phosphatase_N"/>
</dbReference>
<dbReference type="InterPro" id="IPR016195">
    <property type="entry name" value="Pol/histidinol_Pase-like"/>
</dbReference>
<dbReference type="NCBIfam" id="NF006702">
    <property type="entry name" value="PRK09248.1"/>
    <property type="match status" value="1"/>
</dbReference>
<dbReference type="PANTHER" id="PTHR36928">
    <property type="entry name" value="PHOSPHATASE YCDX-RELATED"/>
    <property type="match status" value="1"/>
</dbReference>
<dbReference type="PANTHER" id="PTHR36928:SF1">
    <property type="entry name" value="PHOSPHATASE YCDX-RELATED"/>
    <property type="match status" value="1"/>
</dbReference>
<dbReference type="Pfam" id="PF02811">
    <property type="entry name" value="PHP"/>
    <property type="match status" value="1"/>
</dbReference>
<dbReference type="SMART" id="SM00481">
    <property type="entry name" value="POLIIIAc"/>
    <property type="match status" value="1"/>
</dbReference>
<dbReference type="SUPFAM" id="SSF89550">
    <property type="entry name" value="PHP domain-like"/>
    <property type="match status" value="1"/>
</dbReference>
<proteinExistence type="inferred from homology"/>
<accession>B8E7P4</accession>
<sequence length="254" mass="27455">MQYQVDTHTHTVASSHAYSTIHDYIAVAKQKGIRLFANTDHGPAMADAPHFWHFVNLRVLPRMVDGVGILRGIEANIKNIDGEIDFFGDYLKQLDIVLAGFHEPVYPPSDKATHTEAMINAIKSGKVDIITHPGNPAYPIDIEAVARAAAEYGVALEINNSSFEVSRKGSEANCTAIAKAAKEFGTILVMGSDSHVAFSLGGFARAQAIIDEVAYPPSRLLNRSPSALLAFLAARGHETVADLIPLFSDDEPCC</sequence>
<keyword id="KW-0378">Hydrolase</keyword>
<keyword id="KW-0479">Metal-binding</keyword>
<keyword id="KW-0862">Zinc</keyword>
<feature type="chain" id="PRO_1000185434" description="Probable phosphatase Sbal223_2880">
    <location>
        <begin position="1"/>
        <end position="254"/>
    </location>
</feature>
<feature type="binding site" evidence="1">
    <location>
        <position position="8"/>
    </location>
    <ligand>
        <name>Zn(2+)</name>
        <dbReference type="ChEBI" id="CHEBI:29105"/>
        <label>1</label>
    </ligand>
</feature>
<feature type="binding site" evidence="1">
    <location>
        <position position="10"/>
    </location>
    <ligand>
        <name>Zn(2+)</name>
        <dbReference type="ChEBI" id="CHEBI:29105"/>
        <label>1</label>
    </ligand>
</feature>
<feature type="binding site" evidence="1">
    <location>
        <position position="16"/>
    </location>
    <ligand>
        <name>Zn(2+)</name>
        <dbReference type="ChEBI" id="CHEBI:29105"/>
        <label>2</label>
    </ligand>
</feature>
<feature type="binding site" evidence="1">
    <location>
        <position position="41"/>
    </location>
    <ligand>
        <name>Zn(2+)</name>
        <dbReference type="ChEBI" id="CHEBI:29105"/>
        <label>2</label>
    </ligand>
</feature>
<feature type="binding site" evidence="1">
    <location>
        <position position="74"/>
    </location>
    <ligand>
        <name>Zn(2+)</name>
        <dbReference type="ChEBI" id="CHEBI:29105"/>
        <label>1</label>
    </ligand>
</feature>
<feature type="binding site" evidence="1">
    <location>
        <position position="74"/>
    </location>
    <ligand>
        <name>Zn(2+)</name>
        <dbReference type="ChEBI" id="CHEBI:29105"/>
        <label>3</label>
    </ligand>
</feature>
<feature type="binding site" evidence="1">
    <location>
        <position position="102"/>
    </location>
    <ligand>
        <name>Zn(2+)</name>
        <dbReference type="ChEBI" id="CHEBI:29105"/>
        <label>3</label>
    </ligand>
</feature>
<feature type="binding site" evidence="1">
    <location>
        <position position="132"/>
    </location>
    <ligand>
        <name>Zn(2+)</name>
        <dbReference type="ChEBI" id="CHEBI:29105"/>
        <label>3</label>
    </ligand>
</feature>
<feature type="binding site" evidence="1">
    <location>
        <position position="193"/>
    </location>
    <ligand>
        <name>Zn(2+)</name>
        <dbReference type="ChEBI" id="CHEBI:29105"/>
        <label>1</label>
    </ligand>
</feature>
<feature type="binding site" evidence="1">
    <location>
        <position position="195"/>
    </location>
    <ligand>
        <name>Zn(2+)</name>
        <dbReference type="ChEBI" id="CHEBI:29105"/>
        <label>2</label>
    </ligand>
</feature>
<gene>
    <name type="ordered locus">Sbal223_2880</name>
</gene>
<protein>
    <recommendedName>
        <fullName evidence="1">Probable phosphatase Sbal223_2880</fullName>
        <ecNumber evidence="1">3.1.3.-</ecNumber>
    </recommendedName>
</protein>
<name>Y2880_SHEB2</name>
<evidence type="ECO:0000255" key="1">
    <source>
        <dbReference type="HAMAP-Rule" id="MF_01561"/>
    </source>
</evidence>
<comment type="cofactor">
    <cofactor evidence="1">
        <name>Zn(2+)</name>
        <dbReference type="ChEBI" id="CHEBI:29105"/>
    </cofactor>
    <text evidence="1">Binds 3 Zn(2+) ions per subunit.</text>
</comment>
<comment type="similarity">
    <text evidence="1">Belongs to the PHP family.</text>
</comment>
<organism>
    <name type="scientific">Shewanella baltica (strain OS223)</name>
    <dbReference type="NCBI Taxonomy" id="407976"/>
    <lineage>
        <taxon>Bacteria</taxon>
        <taxon>Pseudomonadati</taxon>
        <taxon>Pseudomonadota</taxon>
        <taxon>Gammaproteobacteria</taxon>
        <taxon>Alteromonadales</taxon>
        <taxon>Shewanellaceae</taxon>
        <taxon>Shewanella</taxon>
    </lineage>
</organism>
<reference key="1">
    <citation type="submission" date="2008-12" db="EMBL/GenBank/DDBJ databases">
        <title>Complete sequence of chromosome of Shewanella baltica OS223.</title>
        <authorList>
            <consortium name="US DOE Joint Genome Institute"/>
            <person name="Lucas S."/>
            <person name="Copeland A."/>
            <person name="Lapidus A."/>
            <person name="Glavina del Rio T."/>
            <person name="Dalin E."/>
            <person name="Tice H."/>
            <person name="Bruce D."/>
            <person name="Goodwin L."/>
            <person name="Pitluck S."/>
            <person name="Chertkov O."/>
            <person name="Meincke L."/>
            <person name="Brettin T."/>
            <person name="Detter J.C."/>
            <person name="Han C."/>
            <person name="Kuske C.R."/>
            <person name="Larimer F."/>
            <person name="Land M."/>
            <person name="Hauser L."/>
            <person name="Kyrpides N."/>
            <person name="Ovchinnikova G."/>
            <person name="Brettar I."/>
            <person name="Rodrigues J."/>
            <person name="Konstantinidis K."/>
            <person name="Tiedje J."/>
        </authorList>
    </citation>
    <scope>NUCLEOTIDE SEQUENCE [LARGE SCALE GENOMIC DNA]</scope>
    <source>
        <strain>OS223</strain>
    </source>
</reference>